<proteinExistence type="evidence at protein level"/>
<keyword id="KW-0027">Amidation</keyword>
<keyword id="KW-0903">Direct protein sequencing</keyword>
<keyword id="KW-0964">Secreted</keyword>
<keyword id="KW-0800">Toxin</keyword>
<sequence>FLAKKVAKKLVSHVAQKQLE</sequence>
<accession>B3EWV9</accession>
<protein>
    <recommendedName>
        <fullName evidence="3">Short cationic peptide-4b</fullName>
        <shortName evidence="3">SCP-4b</shortName>
    </recommendedName>
    <alternativeName>
        <fullName evidence="2">Short cationic peptide-4d</fullName>
        <shortName evidence="2">SCP-4d</shortName>
    </alternativeName>
    <alternativeName>
        <fullName evidence="3">Truncated variant of Cupiennin 4 family</fullName>
    </alternativeName>
</protein>
<comment type="subcellular location">
    <subcellularLocation>
        <location evidence="1">Secreted</location>
    </subcellularLocation>
</comment>
<comment type="tissue specificity">
    <text evidence="5">Expressed by the venom gland.</text>
</comment>
<comment type="mass spectrometry"/>
<comment type="similarity">
    <text evidence="4">Belongs to the cationic peptide 04 (cupiennin) family. 04 subfamily.</text>
</comment>
<organism>
    <name type="scientific">Cupiennius salei</name>
    <name type="common">American wandering spider</name>
    <dbReference type="NCBI Taxonomy" id="6928"/>
    <lineage>
        <taxon>Eukaryota</taxon>
        <taxon>Metazoa</taxon>
        <taxon>Ecdysozoa</taxon>
        <taxon>Arthropoda</taxon>
        <taxon>Chelicerata</taxon>
        <taxon>Arachnida</taxon>
        <taxon>Araneae</taxon>
        <taxon>Araneomorphae</taxon>
        <taxon>Entelegynae</taxon>
        <taxon>Lycosoidea</taxon>
        <taxon>Ctenidae</taxon>
        <taxon>Cupiennius</taxon>
    </lineage>
</organism>
<evidence type="ECO:0000269" key="1">
    <source>
    </source>
</evidence>
<evidence type="ECO:0000303" key="2">
    <source>
    </source>
</evidence>
<evidence type="ECO:0000303" key="3">
    <source ref="2"/>
</evidence>
<evidence type="ECO:0000305" key="4"/>
<evidence type="ECO:0000305" key="5">
    <source>
    </source>
</evidence>
<feature type="peptide" id="PRO_0000421216" description="Short cationic peptide-4b" evidence="1">
    <location>
        <begin position="1"/>
        <end position="20"/>
    </location>
</feature>
<feature type="modified residue" description="Glutamic acid 1-amide" evidence="1">
    <location>
        <position position="20"/>
    </location>
</feature>
<dbReference type="GO" id="GO:0005576">
    <property type="term" value="C:extracellular region"/>
    <property type="evidence" value="ECO:0007669"/>
    <property type="project" value="UniProtKB-SubCell"/>
</dbReference>
<dbReference type="GO" id="GO:0090729">
    <property type="term" value="F:toxin activity"/>
    <property type="evidence" value="ECO:0007669"/>
    <property type="project" value="UniProtKB-KW"/>
</dbReference>
<dbReference type="GO" id="GO:0042742">
    <property type="term" value="P:defense response to bacterium"/>
    <property type="evidence" value="ECO:0007669"/>
    <property type="project" value="InterPro"/>
</dbReference>
<dbReference type="InterPro" id="IPR035164">
    <property type="entry name" value="Cupiennin"/>
</dbReference>
<dbReference type="Pfam" id="PF17563">
    <property type="entry name" value="Cu"/>
    <property type="match status" value="1"/>
</dbReference>
<name>TXS4B_CUPSA</name>
<reference key="1">
    <citation type="journal article" date="2012" name="FEBS J.">
        <title>Multicomponent venom of the spider Cupiennius salei: a bioanalytical investigation applying different strategies.</title>
        <authorList>
            <person name="Trachsel C."/>
            <person name="Siegemund D."/>
            <person name="Kampfer U."/>
            <person name="Kopp L.S."/>
            <person name="Buhr C."/>
            <person name="Grossmann J."/>
            <person name="Luthi C."/>
            <person name="Cunningham M."/>
            <person name="Nentwig W."/>
            <person name="Kuhn-Nentwig L."/>
            <person name="Schurch S."/>
            <person name="Schaller J."/>
        </authorList>
    </citation>
    <scope>PROTEIN SEQUENCE</scope>
    <scope>MASS SPECTROMETRY</scope>
    <scope>AMIDATION AT GLU-20</scope>
    <source>
        <tissue>Venom</tissue>
    </source>
</reference>
<reference key="2">
    <citation type="unpublished observations" date="2015-06">
        <authorList>
            <person name="Kuhn-Nentwig L."/>
            <person name="Gohel T."/>
        </authorList>
    </citation>
    <scope>NOMENCLATURE</scope>
</reference>